<protein>
    <recommendedName>
        <fullName>FMRFamide-like neuropeptides 9</fullName>
    </recommendedName>
    <component>
        <recommendedName>
            <fullName>KPSFVRF-amide 1</fullName>
        </recommendedName>
    </component>
    <component>
        <recommendedName>
            <fullName>KPSFVRF-amide 2</fullName>
        </recommendedName>
    </component>
</protein>
<comment type="function">
    <text evidence="6">FMRFamides and FMRFamide-like peptides are neuropeptides.</text>
</comment>
<comment type="function">
    <text evidence="3 4 5">KPSFVRF-amide: Has no effect on somatic body wall muscle, inhibits contraction of vaginal vera muscle, and inhibits the activity of the dissected pharyngeal myogenic muscle system (PubMed:16187307, PubMed:9920762). Acts as a ligand for the npr-22 receptor in vitro (PubMed:16377032).</text>
</comment>
<comment type="subcellular location">
    <subcellularLocation>
        <location evidence="6">Secreted</location>
    </subcellularLocation>
</comment>
<comment type="tissue specificity">
    <text evidence="6">Each flp gene is expressed in a distinct set of neurons.</text>
</comment>
<comment type="developmental stage">
    <text evidence="5">Expressed in eggs and larvae, but not in adults.</text>
</comment>
<comment type="mass spectrometry">
    <molecule>KPSFVRF-amide 1</molecule>
</comment>
<comment type="similarity">
    <text evidence="1">Belongs to the FARP (FMRFamide related peptide) family.</text>
</comment>
<comment type="sequence caution" evidence="6">
    <conflict type="erroneous initiation">
        <sequence resource="EMBL-CDS" id="AAC08946"/>
    </conflict>
</comment>
<dbReference type="EMBL" id="AF042395">
    <property type="protein sequence ID" value="AAC08946.1"/>
    <property type="status" value="ALT_INIT"/>
    <property type="molecule type" value="mRNA"/>
</dbReference>
<dbReference type="EMBL" id="Z69658">
    <property type="protein sequence ID" value="CAA93480.2"/>
    <property type="molecule type" value="Genomic_DNA"/>
</dbReference>
<dbReference type="PIR" id="T19799">
    <property type="entry name" value="T19799"/>
</dbReference>
<dbReference type="RefSeq" id="NP_502436.2">
    <property type="nucleotide sequence ID" value="NM_070035.8"/>
</dbReference>
<dbReference type="BioGRID" id="43324">
    <property type="interactions" value="6"/>
</dbReference>
<dbReference type="DIP" id="DIP-24577N"/>
<dbReference type="FunCoup" id="Q18502">
    <property type="interactions" value="784"/>
</dbReference>
<dbReference type="STRING" id="6239.C36H8.3.1"/>
<dbReference type="PaxDb" id="6239-C36H8.3"/>
<dbReference type="PeptideAtlas" id="Q18502"/>
<dbReference type="EnsemblMetazoa" id="C36H8.3.1">
    <property type="protein sequence ID" value="C36H8.3.1"/>
    <property type="gene ID" value="WBGene00001452"/>
</dbReference>
<dbReference type="GeneID" id="178232"/>
<dbReference type="KEGG" id="cel:CELE_C36H8.3"/>
<dbReference type="UCSC" id="C36H8.3.1">
    <property type="organism name" value="c. elegans"/>
</dbReference>
<dbReference type="AGR" id="WB:WBGene00001452"/>
<dbReference type="CTD" id="178232"/>
<dbReference type="WormBase" id="C36H8.3">
    <property type="protein sequence ID" value="CE39568"/>
    <property type="gene ID" value="WBGene00001452"/>
    <property type="gene designation" value="flp-9"/>
</dbReference>
<dbReference type="eggNOG" id="ENOG502TI82">
    <property type="taxonomic scope" value="Eukaryota"/>
</dbReference>
<dbReference type="HOGENOM" id="CLU_2279980_0_0_1"/>
<dbReference type="InParanoid" id="Q18502"/>
<dbReference type="OMA" id="CAQPQNR"/>
<dbReference type="OrthoDB" id="5805967at2759"/>
<dbReference type="PRO" id="PR:Q18502"/>
<dbReference type="Proteomes" id="UP000001940">
    <property type="component" value="Chromosome IV"/>
</dbReference>
<dbReference type="Bgee" id="WBGene00001452">
    <property type="expression patterns" value="Expressed in larva and 3 other cell types or tissues"/>
</dbReference>
<dbReference type="GO" id="GO:0005576">
    <property type="term" value="C:extracellular region"/>
    <property type="evidence" value="ECO:0007669"/>
    <property type="project" value="UniProtKB-SubCell"/>
</dbReference>
<dbReference type="GO" id="GO:0071855">
    <property type="term" value="F:neuropeptide receptor binding"/>
    <property type="evidence" value="ECO:0000314"/>
    <property type="project" value="WormBase"/>
</dbReference>
<dbReference type="GO" id="GO:0001508">
    <property type="term" value="P:action potential"/>
    <property type="evidence" value="ECO:0000314"/>
    <property type="project" value="WormBase"/>
</dbReference>
<dbReference type="GO" id="GO:0007626">
    <property type="term" value="P:locomotory behavior"/>
    <property type="evidence" value="ECO:0000315"/>
    <property type="project" value="WormBase"/>
</dbReference>
<dbReference type="GO" id="GO:0007218">
    <property type="term" value="P:neuropeptide signaling pathway"/>
    <property type="evidence" value="ECO:0000314"/>
    <property type="project" value="WormBase"/>
</dbReference>
<dbReference type="InterPro" id="IPR051041">
    <property type="entry name" value="FMRFamide-related_np"/>
</dbReference>
<dbReference type="PANTHER" id="PTHR20986:SF24">
    <property type="entry name" value="FMRFAMIDE-LIKE NEUROPEPTIDES 1"/>
    <property type="match status" value="1"/>
</dbReference>
<dbReference type="PANTHER" id="PTHR20986">
    <property type="entry name" value="FMRFAMIDE-RELATED PEPTIDES"/>
    <property type="match status" value="1"/>
</dbReference>
<reference evidence="6 7" key="1">
    <citation type="journal article" date="1998" name="Brain Res. Mol. Brain Res.">
        <title>FMRFamide-related gene family in the nematode, Caenorhabditis elegans.</title>
        <authorList>
            <person name="Nelson L.S."/>
            <person name="Kim K."/>
            <person name="Memmott J.E."/>
            <person name="Li C."/>
        </authorList>
    </citation>
    <scope>NUCLEOTIDE SEQUENCE [MRNA]</scope>
    <source>
        <strain evidence="7">Bristol N2</strain>
    </source>
</reference>
<reference evidence="8" key="2">
    <citation type="journal article" date="1998" name="Science">
        <title>Genome sequence of the nematode C. elegans: a platform for investigating biology.</title>
        <authorList>
            <consortium name="The C. elegans sequencing consortium"/>
        </authorList>
    </citation>
    <scope>NUCLEOTIDE SEQUENCE [LARGE SCALE GENOMIC DNA]</scope>
    <source>
        <strain>Bristol N2</strain>
    </source>
</reference>
<reference evidence="6" key="3">
    <citation type="journal article" date="1999" name="Biochem. Biophys. Res. Commun.">
        <title>Isolation, pharmacology and gene organization of KPSFVRFamide: a neuropeptide from Caenorhabditis elegans.</title>
        <authorList>
            <person name="Marks N.J."/>
            <person name="Maule A.G."/>
            <person name="Li C."/>
            <person name="Nelson L.S."/>
            <person name="Thompson D.P."/>
            <person name="Alexander-Bowman S."/>
            <person name="Geary T.G."/>
            <person name="Halton D.W."/>
            <person name="Verhaert P."/>
            <person name="Shaw C."/>
        </authorList>
    </citation>
    <scope>PROTEIN SEQUENCE OF 66-72 AND 93-99</scope>
    <scope>FUNCTION</scope>
    <scope>DEVELOPMENTAL STAGE</scope>
    <scope>MASS SPECTROMETRY</scope>
    <scope>AMIDATION AT PHE-72 AND PHE-99</scope>
</reference>
<reference evidence="6" key="4">
    <citation type="journal article" date="2005" name="Biochem. Biophys. Res. Commun.">
        <title>Discovering neuropeptides in Caenorhabditis elegans by two dimensional liquid chromatography and mass spectrometry.</title>
        <authorList>
            <person name="Husson S.J."/>
            <person name="Clynen E."/>
            <person name="Baggerman G."/>
            <person name="De Loof A."/>
            <person name="Schoofs L."/>
        </authorList>
    </citation>
    <scope>PROTEIN SEQUENCE OF 66-72 AND 93-99</scope>
    <scope>AMIDATION AT PHE-72 AND PHE-99</scope>
    <source>
        <strain evidence="2">Bristol N2</strain>
    </source>
</reference>
<reference evidence="6" key="5">
    <citation type="journal article" date="2005" name="J. Neurobiol.">
        <title>Role of a FMRFamide-like family of neuropeptides in the pharyngeal nervous system of Caenorhabditis elegans.</title>
        <authorList>
            <person name="Papaioannou S."/>
            <person name="Marsden D."/>
            <person name="Franks C.J."/>
            <person name="Walker R.J."/>
            <person name="Holden-Dye L."/>
        </authorList>
    </citation>
    <scope>FUNCTION</scope>
</reference>
<reference key="6">
    <citation type="journal article" date="2006" name="Peptides">
        <title>FMRFamide related peptide ligands activate the Caenorhabditis elegans orphan GPCR Y59H11AL.1.</title>
        <authorList>
            <person name="Mertens I."/>
            <person name="Clinckspoor I."/>
            <person name="Janssen T."/>
            <person name="Nachman R."/>
            <person name="Schoofs L."/>
        </authorList>
    </citation>
    <scope>FUNCTION (KPSFVRF-AMIDE)</scope>
</reference>
<name>FLP09_CAEEL</name>
<accession>Q18502</accession>
<accession>Q7KPT0</accession>
<sequence>MNQFYALFLVACIAAMANAYEEPDLDALAEFCGKESNRKYCDQIAQLATQHAIGINQEQVRMEKRKPSFVRFGKRSGYPLVIDDEEMRMDKRKPSFVRFGRK</sequence>
<proteinExistence type="evidence at protein level"/>
<gene>
    <name evidence="9" type="primary">flp-9</name>
    <name type="ORF">C36H8.3</name>
</gene>
<keyword id="KW-0027">Amidation</keyword>
<keyword id="KW-0165">Cleavage on pair of basic residues</keyword>
<keyword id="KW-0903">Direct protein sequencing</keyword>
<keyword id="KW-0527">Neuropeptide</keyword>
<keyword id="KW-1185">Reference proteome</keyword>
<keyword id="KW-0677">Repeat</keyword>
<keyword id="KW-0964">Secreted</keyword>
<keyword id="KW-0732">Signal</keyword>
<organism>
    <name type="scientific">Caenorhabditis elegans</name>
    <dbReference type="NCBI Taxonomy" id="6239"/>
    <lineage>
        <taxon>Eukaryota</taxon>
        <taxon>Metazoa</taxon>
        <taxon>Ecdysozoa</taxon>
        <taxon>Nematoda</taxon>
        <taxon>Chromadorea</taxon>
        <taxon>Rhabditida</taxon>
        <taxon>Rhabditina</taxon>
        <taxon>Rhabditomorpha</taxon>
        <taxon>Rhabditoidea</taxon>
        <taxon>Rhabditidae</taxon>
        <taxon>Peloderinae</taxon>
        <taxon>Caenorhabditis</taxon>
    </lineage>
</organism>
<feature type="signal peptide" evidence="1">
    <location>
        <begin position="1"/>
        <end position="19"/>
    </location>
</feature>
<feature type="propeptide" id="PRO_0000312060" evidence="1">
    <location>
        <begin position="20"/>
        <end position="63"/>
    </location>
</feature>
<feature type="peptide" id="PRO_0000312061" description="KPSFVRF-amide 1" evidence="2 5">
    <location>
        <begin position="66"/>
        <end position="72"/>
    </location>
</feature>
<feature type="propeptide" id="PRO_0000312062" evidence="1">
    <location>
        <begin position="75"/>
        <end position="90"/>
    </location>
</feature>
<feature type="peptide" id="PRO_0000312063" description="KPSFVRF-amide 2" evidence="2 5">
    <location>
        <begin position="93"/>
        <end position="99"/>
    </location>
</feature>
<feature type="modified residue" description="Phenylalanine amide" evidence="2 5">
    <location>
        <position position="72"/>
    </location>
</feature>
<feature type="modified residue" description="Phenylalanine amide" evidence="2 5">
    <location>
        <position position="99"/>
    </location>
</feature>
<evidence type="ECO:0000255" key="1"/>
<evidence type="ECO:0000269" key="2">
    <source>
    </source>
</evidence>
<evidence type="ECO:0000269" key="3">
    <source>
    </source>
</evidence>
<evidence type="ECO:0000269" key="4">
    <source>
    </source>
</evidence>
<evidence type="ECO:0000269" key="5">
    <source>
    </source>
</evidence>
<evidence type="ECO:0000305" key="6"/>
<evidence type="ECO:0000312" key="7">
    <source>
        <dbReference type="EMBL" id="AAC08946.1"/>
    </source>
</evidence>
<evidence type="ECO:0000312" key="8">
    <source>
        <dbReference type="EMBL" id="CAA93480.2"/>
    </source>
</evidence>
<evidence type="ECO:0000312" key="9">
    <source>
        <dbReference type="WormBase" id="C36H8.3"/>
    </source>
</evidence>